<proteinExistence type="evidence at transcript level"/>
<gene>
    <name evidence="4" type="primary">CYP76T24</name>
    <name evidence="5" type="ORF">Caros011349</name>
</gene>
<evidence type="ECO:0000250" key="1">
    <source>
        <dbReference type="UniProtKB" id="P04798"/>
    </source>
</evidence>
<evidence type="ECO:0000255" key="2"/>
<evidence type="ECO:0000255" key="3">
    <source>
        <dbReference type="PROSITE-ProRule" id="PRU00498"/>
    </source>
</evidence>
<evidence type="ECO:0000303" key="4">
    <source>
    </source>
</evidence>
<evidence type="ECO:0000305" key="5"/>
<keyword id="KW-0325">Glycoprotein</keyword>
<keyword id="KW-0349">Heme</keyword>
<keyword id="KW-0408">Iron</keyword>
<keyword id="KW-0472">Membrane</keyword>
<keyword id="KW-0479">Metal-binding</keyword>
<keyword id="KW-0503">Monooxygenase</keyword>
<keyword id="KW-0560">Oxidoreductase</keyword>
<keyword id="KW-0812">Transmembrane</keyword>
<keyword id="KW-1133">Transmembrane helix</keyword>
<reference key="1">
    <citation type="journal article" date="2014" name="Nat. Commun.">
        <title>The seco-iridoid pathway from Catharanthus roseus.</title>
        <authorList>
            <person name="Miettinen K."/>
            <person name="Dong L."/>
            <person name="Navrot N."/>
            <person name="Schneider T."/>
            <person name="Burlat V."/>
            <person name="Pollier J."/>
            <person name="Woittiez L."/>
            <person name="van der Krol S."/>
            <person name="Lugan R."/>
            <person name="Ilc T."/>
            <person name="Verpoorte R."/>
            <person name="Oksman-Caldentey K.M."/>
            <person name="Martinoia E."/>
            <person name="Bouwmeester H."/>
            <person name="Goossens A."/>
            <person name="Memelink J."/>
            <person name="Werck-Reichhart D."/>
        </authorList>
    </citation>
    <scope>NUCLEOTIDE SEQUENCE [MRNA]</scope>
    <source>
        <strain>cv. Little Bright Eyes</strain>
    </source>
</reference>
<protein>
    <recommendedName>
        <fullName evidence="4">Cytochrome P450 76T24</fullName>
        <shortName evidence="4">CrCYP76T24</shortName>
        <ecNumber evidence="5">1.14.-.-</ecNumber>
    </recommendedName>
</protein>
<sequence>MDVDILLSLVLAFFGWAAIYFLTSRLSFGKRARLPPGPYPFPVIGNIFQLGQNPNQSLTKLAKTYGPLMSLKLGSNTTVVVSSPAVAREVLQKNDQVFSSRIIPHAAEAHAHHKYSMVWLQVSGLWRNLRKISKEHMFAAQRLDASEGLRQEKLQELHDYLVRCSTSNKAVNFGQTAFTTSLNFISSTFFSVDFAAYGSDSSQEFKDIVWRILKSYSTPNVADYFPVLKFMDPQGILQKNTFLFSKMFDIFDNIINERLMMRGSLDTSKKNDLLEALLNHSANNESEFSLNELKHMLLDLFLGGTETTSTTLEWAMAELLRNPEKLERVRAELHQVIGEKEIIHESDISRLPYLQAIVKETFRLHPIVPLLIPHKAEADVEINGYTVPKNSQILINVWASGRDSGTWLDPETFSPERFLHSEIDMKGRHFELIPFGAGRRICPGLPLAYRTLHTMLATCIHNFDWKLKDGMKPEDIDMEEKYGLTLQLAVPLNVIPVKL</sequence>
<accession>W8JMV1</accession>
<dbReference type="EC" id="1.14.-.-" evidence="5"/>
<dbReference type="EMBL" id="KF302075">
    <property type="protein sequence ID" value="AHK60842.1"/>
    <property type="molecule type" value="mRNA"/>
</dbReference>
<dbReference type="SMR" id="W8JMV1"/>
<dbReference type="GlyCosmos" id="W8JMV1">
    <property type="glycosylation" value="4 sites, No reported glycans"/>
</dbReference>
<dbReference type="GO" id="GO:0016020">
    <property type="term" value="C:membrane"/>
    <property type="evidence" value="ECO:0007669"/>
    <property type="project" value="UniProtKB-SubCell"/>
</dbReference>
<dbReference type="GO" id="GO:0020037">
    <property type="term" value="F:heme binding"/>
    <property type="evidence" value="ECO:0007669"/>
    <property type="project" value="InterPro"/>
</dbReference>
<dbReference type="GO" id="GO:0005506">
    <property type="term" value="F:iron ion binding"/>
    <property type="evidence" value="ECO:0007669"/>
    <property type="project" value="InterPro"/>
</dbReference>
<dbReference type="GO" id="GO:0004497">
    <property type="term" value="F:monooxygenase activity"/>
    <property type="evidence" value="ECO:0007669"/>
    <property type="project" value="UniProtKB-KW"/>
</dbReference>
<dbReference type="GO" id="GO:0016705">
    <property type="term" value="F:oxidoreductase activity, acting on paired donors, with incorporation or reduction of molecular oxygen"/>
    <property type="evidence" value="ECO:0007669"/>
    <property type="project" value="InterPro"/>
</dbReference>
<dbReference type="CDD" id="cd11073">
    <property type="entry name" value="CYP76-like"/>
    <property type="match status" value="1"/>
</dbReference>
<dbReference type="FunFam" id="1.10.630.10:FF:000007">
    <property type="entry name" value="Cytochrome P450 76C4"/>
    <property type="match status" value="1"/>
</dbReference>
<dbReference type="Gene3D" id="1.10.630.10">
    <property type="entry name" value="Cytochrome P450"/>
    <property type="match status" value="1"/>
</dbReference>
<dbReference type="InterPro" id="IPR001128">
    <property type="entry name" value="Cyt_P450"/>
</dbReference>
<dbReference type="InterPro" id="IPR017972">
    <property type="entry name" value="Cyt_P450_CS"/>
</dbReference>
<dbReference type="InterPro" id="IPR002401">
    <property type="entry name" value="Cyt_P450_E_grp-I"/>
</dbReference>
<dbReference type="InterPro" id="IPR036396">
    <property type="entry name" value="Cyt_P450_sf"/>
</dbReference>
<dbReference type="PANTHER" id="PTHR47950">
    <property type="entry name" value="CYTOCHROME P450, FAMILY 76, SUBFAMILY C, POLYPEPTIDE 5-RELATED"/>
    <property type="match status" value="1"/>
</dbReference>
<dbReference type="PANTHER" id="PTHR47950:SF4">
    <property type="entry name" value="GERANIOL 8-HYDROXYLASE-LIKE"/>
    <property type="match status" value="1"/>
</dbReference>
<dbReference type="Pfam" id="PF00067">
    <property type="entry name" value="p450"/>
    <property type="match status" value="1"/>
</dbReference>
<dbReference type="PRINTS" id="PR00463">
    <property type="entry name" value="EP450I"/>
</dbReference>
<dbReference type="PRINTS" id="PR00385">
    <property type="entry name" value="P450"/>
</dbReference>
<dbReference type="SUPFAM" id="SSF48264">
    <property type="entry name" value="Cytochrome P450"/>
    <property type="match status" value="1"/>
</dbReference>
<dbReference type="PROSITE" id="PS00086">
    <property type="entry name" value="CYTOCHROME_P450"/>
    <property type="match status" value="1"/>
</dbReference>
<comment type="subcellular location">
    <subcellularLocation>
        <location evidence="2">Membrane</location>
        <topology evidence="2">Single-pass membrane protein</topology>
    </subcellularLocation>
</comment>
<comment type="similarity">
    <text evidence="5">Belongs to the cytochrome P450 family.</text>
</comment>
<comment type="online information" name="ORCAE database">
    <link uri="https://orcae.psb.ugent.be/taxa/catro/regular/v1/"/>
</comment>
<organism>
    <name type="scientific">Catharanthus roseus</name>
    <name type="common">Madagascar periwinkle</name>
    <name type="synonym">Vinca rosea</name>
    <dbReference type="NCBI Taxonomy" id="4058"/>
    <lineage>
        <taxon>Eukaryota</taxon>
        <taxon>Viridiplantae</taxon>
        <taxon>Streptophyta</taxon>
        <taxon>Embryophyta</taxon>
        <taxon>Tracheophyta</taxon>
        <taxon>Spermatophyta</taxon>
        <taxon>Magnoliopsida</taxon>
        <taxon>eudicotyledons</taxon>
        <taxon>Gunneridae</taxon>
        <taxon>Pentapetalae</taxon>
        <taxon>asterids</taxon>
        <taxon>lamiids</taxon>
        <taxon>Gentianales</taxon>
        <taxon>Apocynaceae</taxon>
        <taxon>Rauvolfioideae</taxon>
        <taxon>Vinceae</taxon>
        <taxon>Catharanthinae</taxon>
        <taxon>Catharanthus</taxon>
    </lineage>
</organism>
<name>CYT24_CATRO</name>
<feature type="chain" id="PRO_0000446415" description="Cytochrome P450 76T24">
    <location>
        <begin position="1"/>
        <end position="499"/>
    </location>
</feature>
<feature type="transmembrane region" description="Helical" evidence="2">
    <location>
        <begin position="3"/>
        <end position="23"/>
    </location>
</feature>
<feature type="binding site" description="axial binding residue" evidence="1">
    <location>
        <position position="442"/>
    </location>
    <ligand>
        <name>heme</name>
        <dbReference type="ChEBI" id="CHEBI:30413"/>
    </ligand>
    <ligandPart>
        <name>Fe</name>
        <dbReference type="ChEBI" id="CHEBI:18248"/>
    </ligandPart>
</feature>
<feature type="glycosylation site" description="N-linked (GlcNAc...) asparagine" evidence="3">
    <location>
        <position position="55"/>
    </location>
</feature>
<feature type="glycosylation site" description="N-linked (GlcNAc...) asparagine" evidence="3">
    <location>
        <position position="76"/>
    </location>
</feature>
<feature type="glycosylation site" description="N-linked (GlcNAc...) asparagine" evidence="3">
    <location>
        <position position="279"/>
    </location>
</feature>
<feature type="glycosylation site" description="N-linked (GlcNAc...) asparagine" evidence="3">
    <location>
        <position position="284"/>
    </location>
</feature>